<organism>
    <name type="scientific">Bos taurus</name>
    <name type="common">Bovine</name>
    <dbReference type="NCBI Taxonomy" id="9913"/>
    <lineage>
        <taxon>Eukaryota</taxon>
        <taxon>Metazoa</taxon>
        <taxon>Chordata</taxon>
        <taxon>Craniata</taxon>
        <taxon>Vertebrata</taxon>
        <taxon>Euteleostomi</taxon>
        <taxon>Mammalia</taxon>
        <taxon>Eutheria</taxon>
        <taxon>Laurasiatheria</taxon>
        <taxon>Artiodactyla</taxon>
        <taxon>Ruminantia</taxon>
        <taxon>Pecora</taxon>
        <taxon>Bovidae</taxon>
        <taxon>Bovinae</taxon>
        <taxon>Bos</taxon>
    </lineage>
</organism>
<accession>Q6QUN5</accession>
<gene>
    <name type="primary">TREM1</name>
</gene>
<keyword id="KW-1064">Adaptive immunity</keyword>
<keyword id="KW-1003">Cell membrane</keyword>
<keyword id="KW-1015">Disulfide bond</keyword>
<keyword id="KW-0325">Glycoprotein</keyword>
<keyword id="KW-0391">Immunity</keyword>
<keyword id="KW-0393">Immunoglobulin domain</keyword>
<keyword id="KW-0399">Innate immunity</keyword>
<keyword id="KW-0472">Membrane</keyword>
<keyword id="KW-0675">Receptor</keyword>
<keyword id="KW-1185">Reference proteome</keyword>
<keyword id="KW-0732">Signal</keyword>
<keyword id="KW-0812">Transmembrane</keyword>
<keyword id="KW-1133">Transmembrane helix</keyword>
<evidence type="ECO:0000250" key="1">
    <source>
        <dbReference type="UniProtKB" id="Q9NP99"/>
    </source>
</evidence>
<evidence type="ECO:0000255" key="2"/>
<evidence type="ECO:0000255" key="3">
    <source>
        <dbReference type="PROSITE-ProRule" id="PRU00114"/>
    </source>
</evidence>
<evidence type="ECO:0000256" key="4">
    <source>
        <dbReference type="SAM" id="MobiDB-lite"/>
    </source>
</evidence>
<evidence type="ECO:0000269" key="5">
    <source>
    </source>
</evidence>
<proteinExistence type="evidence at transcript level"/>
<reference key="1">
    <citation type="journal article" date="2004" name="Vet. Immunol. Immunopathol.">
        <title>Characterization of bovine cDNA encoding triggering receptor expressed on myeloid cells 1 (TREM-1).</title>
        <authorList>
            <person name="Ramanathan B."/>
            <person name="Minton J.E."/>
            <person name="Ross C.R."/>
            <person name="Blecha F."/>
        </authorList>
    </citation>
    <scope>NUCLEOTIDE SEQUENCE [MRNA]</scope>
    <scope>TISSUE SPECIFICITY</scope>
    <source>
        <tissue>Bone marrow</tissue>
    </source>
</reference>
<dbReference type="EMBL" id="AY525122">
    <property type="protein sequence ID" value="AAS66748.1"/>
    <property type="molecule type" value="mRNA"/>
</dbReference>
<dbReference type="RefSeq" id="NP_996853.1">
    <property type="nucleotide sequence ID" value="NM_206970.1"/>
</dbReference>
<dbReference type="SMR" id="Q6QUN5"/>
<dbReference type="FunCoup" id="Q6QUN5">
    <property type="interactions" value="44"/>
</dbReference>
<dbReference type="STRING" id="9913.ENSBTAP00000066363"/>
<dbReference type="GlyCosmos" id="Q6QUN5">
    <property type="glycosylation" value="1 site, No reported glycans"/>
</dbReference>
<dbReference type="GlyGen" id="Q6QUN5">
    <property type="glycosylation" value="1 site"/>
</dbReference>
<dbReference type="PaxDb" id="9913-ENSBTAP00000023397"/>
<dbReference type="GeneID" id="404547"/>
<dbReference type="KEGG" id="bta:404547"/>
<dbReference type="CTD" id="54210"/>
<dbReference type="eggNOG" id="ENOG502TE0T">
    <property type="taxonomic scope" value="Eukaryota"/>
</dbReference>
<dbReference type="InParanoid" id="Q6QUN5"/>
<dbReference type="OrthoDB" id="8959642at2759"/>
<dbReference type="Proteomes" id="UP000009136">
    <property type="component" value="Unplaced"/>
</dbReference>
<dbReference type="GO" id="GO:0009986">
    <property type="term" value="C:cell surface"/>
    <property type="evidence" value="ECO:0000318"/>
    <property type="project" value="GO_Central"/>
</dbReference>
<dbReference type="GO" id="GO:0005886">
    <property type="term" value="C:plasma membrane"/>
    <property type="evidence" value="ECO:0007669"/>
    <property type="project" value="UniProtKB-SubCell"/>
</dbReference>
<dbReference type="GO" id="GO:0004888">
    <property type="term" value="F:transmembrane signaling receptor activity"/>
    <property type="evidence" value="ECO:0000318"/>
    <property type="project" value="GO_Central"/>
</dbReference>
<dbReference type="GO" id="GO:0002250">
    <property type="term" value="P:adaptive immune response"/>
    <property type="evidence" value="ECO:0007669"/>
    <property type="project" value="UniProtKB-KW"/>
</dbReference>
<dbReference type="GO" id="GO:0006955">
    <property type="term" value="P:immune response"/>
    <property type="evidence" value="ECO:0000318"/>
    <property type="project" value="GO_Central"/>
</dbReference>
<dbReference type="GO" id="GO:0045087">
    <property type="term" value="P:innate immune response"/>
    <property type="evidence" value="ECO:0007669"/>
    <property type="project" value="UniProtKB-KW"/>
</dbReference>
<dbReference type="GO" id="GO:0030593">
    <property type="term" value="P:neutrophil chemotaxis"/>
    <property type="evidence" value="ECO:0000318"/>
    <property type="project" value="GO_Central"/>
</dbReference>
<dbReference type="GO" id="GO:0070945">
    <property type="term" value="P:neutrophil-mediated killing of gram-negative bacterium"/>
    <property type="evidence" value="ECO:0000318"/>
    <property type="project" value="GO_Central"/>
</dbReference>
<dbReference type="Gene3D" id="2.60.40.10">
    <property type="entry name" value="Immunoglobulins"/>
    <property type="match status" value="1"/>
</dbReference>
<dbReference type="InterPro" id="IPR007110">
    <property type="entry name" value="Ig-like_dom"/>
</dbReference>
<dbReference type="InterPro" id="IPR036179">
    <property type="entry name" value="Ig-like_dom_sf"/>
</dbReference>
<dbReference type="InterPro" id="IPR013783">
    <property type="entry name" value="Ig-like_fold"/>
</dbReference>
<dbReference type="InterPro" id="IPR003599">
    <property type="entry name" value="Ig_sub"/>
</dbReference>
<dbReference type="InterPro" id="IPR013106">
    <property type="entry name" value="Ig_V-set"/>
</dbReference>
<dbReference type="PANTHER" id="PTHR19357">
    <property type="entry name" value="TRIGGERING RECEPTOR EXPRESSED ON MYELOID CELLS 1"/>
    <property type="match status" value="1"/>
</dbReference>
<dbReference type="PANTHER" id="PTHR19357:SF0">
    <property type="entry name" value="TRIGGERING RECEPTOR EXPRESSED ON MYELOID CELLS 1"/>
    <property type="match status" value="1"/>
</dbReference>
<dbReference type="Pfam" id="PF07686">
    <property type="entry name" value="V-set"/>
    <property type="match status" value="1"/>
</dbReference>
<dbReference type="SMART" id="SM00409">
    <property type="entry name" value="IG"/>
    <property type="match status" value="1"/>
</dbReference>
<dbReference type="SUPFAM" id="SSF48726">
    <property type="entry name" value="Immunoglobulin"/>
    <property type="match status" value="1"/>
</dbReference>
<dbReference type="PROSITE" id="PS50835">
    <property type="entry name" value="IG_LIKE"/>
    <property type="match status" value="1"/>
</dbReference>
<protein>
    <recommendedName>
        <fullName>Triggering receptor expressed on myeloid cells 1</fullName>
        <shortName>TREM-1</shortName>
    </recommendedName>
    <cdAntigenName>CD354</cdAntigenName>
</protein>
<feature type="signal peptide" evidence="2">
    <location>
        <begin position="1"/>
        <end position="20"/>
    </location>
</feature>
<feature type="chain" id="PRO_0000042796" description="Triggering receptor expressed on myeloid cells 1">
    <location>
        <begin position="21"/>
        <end position="232"/>
    </location>
</feature>
<feature type="topological domain" description="Extracellular" evidence="2">
    <location>
        <begin position="21"/>
        <end position="203"/>
    </location>
</feature>
<feature type="transmembrane region" description="Helical" evidence="2">
    <location>
        <begin position="204"/>
        <end position="224"/>
    </location>
</feature>
<feature type="topological domain" description="Cytoplasmic" evidence="2">
    <location>
        <begin position="225"/>
        <end position="232"/>
    </location>
</feature>
<feature type="domain" description="Ig-like V-type">
    <location>
        <begin position="21"/>
        <end position="125"/>
    </location>
</feature>
<feature type="region of interest" description="Disordered" evidence="4">
    <location>
        <begin position="152"/>
        <end position="186"/>
    </location>
</feature>
<feature type="glycosylation site" description="N-linked (GlcNAc...) asparagine" evidence="2">
    <location>
        <position position="192"/>
    </location>
</feature>
<feature type="disulfide bond" evidence="3">
    <location>
        <begin position="41"/>
        <end position="109"/>
    </location>
</feature>
<name>TREM1_BOVIN</name>
<comment type="function">
    <text evidence="1">Cell surface receptor that plays important roles in innate and adaptive immunity by amplifying inflammatory responses. Upon activation by various ligands such as PGLYRP1, HMGB1 or HSP70, multimerizes and forms a complex with transmembrane adapter TYROBP/DAP12. In turn, initiates a SYK-mediated cascade of tyrosine phosphorylation, activating multiple downstream mediators such as BTK, MAPK1, MAPK3 or phospholipase C-gamma. This cascade promotes the neutrophil- and macrophage-mediated release of pro-inflammatory cytokines and/or chemokines, as well as their migration and thereby amplifies inflammatory responses that are triggered by bacterial and fungal infections. By also promoting the amplification of inflammatory signals that are initially triggered by Toll-like receptor (TLR) and NOD-like receptor engagement, plays a major role in the pathophysiology of acute and chronic inflammatory diseases of different etiologies including septic shock and atherosclerosis.</text>
</comment>
<comment type="subunit">
    <text evidence="1">Monomer. Homomultimer; when activated. Interacts with TYROBP/DAP12. Interacts with TLR4.</text>
</comment>
<comment type="subcellular location">
    <subcellularLocation>
        <location evidence="1">Cell membrane</location>
        <topology evidence="1">Single-pass type I membrane protein</topology>
    </subcellularLocation>
    <text evidence="1">Recruited to lipid rafts when activated.</text>
</comment>
<comment type="tissue specificity">
    <text evidence="5">Detected in bone marrow, tongue, lung, liver, thymus, spleen, jejunum, ileum and lymph nodes.</text>
</comment>
<sequence>MRKAGVWGLLWMLFIEEIQAAAEVFEEKCTLAEGQTLKVSCPTNTNIYSNSQKAWQRLKDNGEVQTLAITEGSSQVRVGKYFLEDIPSEGMLQIQMANLQVEDSGLYRCVILGPSDPIILFHPVRLVVTKNSLGTPASDEYPCQVSVQNPTPLPVTTKLRPRPRPRPKPVTQPIPTSADRLSSPGFTVTPTNVTHVNRAPGISIIIPAACGLLSKTLVFIGLFAVTHRSFAS</sequence>